<comment type="function">
    <text evidence="1">The UvrABC repair system catalyzes the recognition and processing of DNA lesions. UvrC both incises the 5' and 3' sides of the lesion. The N-terminal half is responsible for the 3' incision and the C-terminal half is responsible for the 5' incision.</text>
</comment>
<comment type="subunit">
    <text evidence="1">Interacts with UvrB in an incision complex.</text>
</comment>
<comment type="subcellular location">
    <subcellularLocation>
        <location evidence="1">Cytoplasm</location>
    </subcellularLocation>
</comment>
<comment type="similarity">
    <text evidence="1">Belongs to the UvrC family.</text>
</comment>
<sequence>MNDLIKHKLELLPSNPGCYLHKDKFGNIIYVGKAKNLKNRVRSYFRGSHDTKTELLVSEIADFEFIVTESNIEALLLEINLIQENMPKFNIRLKDGKSYPFIKITKELYPRLLITRQVKKDGGLYFGPYPDAGAANEIKKLLDRIFPFKKCKNPANKVCFYYHIGQCKAHTICHTTEAYWQGLVEDVKNFLNGHDDKIVNQLKAKMKDMSDQMEFERAAEYRDLIEAVSTLRTKQRVIRQDMQDRDIFGYYVDKGWMCVQVFFVRQGKLIQRDVNMFPYYNDAEEDFLTYMGQFYLDSRHLKPKEIFIPGDIDQESVEALVGDEVKVFKPQRGEKKQLVNLATKNARVSLTQKFDLLEKDIAKTQGAIENLGKLMGIPTPVRIESFDNSNIMGTSPVSAMVVFENGKPNKKEYRKYKIKTVEGPDDYASMREVIRRRYSRVKRDGLTPPDLIIIDGGQGQVNVAKDVLRNELNLSIPVAGLQKNDKHQTNELLFGDPLRVIDLPRQSEEFFLLHRIQDEVHRFAITFHRQVRSKNSFSSKLDGVEGLGPKRKQKLLKNFKSMTAIQQASVEDIQALGIPEKVAQALLDKLSQDSH</sequence>
<name>UVRC_STRT1</name>
<dbReference type="EMBL" id="CP000024">
    <property type="protein sequence ID" value="AAV62847.1"/>
    <property type="molecule type" value="Genomic_DNA"/>
</dbReference>
<dbReference type="RefSeq" id="WP_011227336.1">
    <property type="nucleotide sequence ID" value="NC_006449.1"/>
</dbReference>
<dbReference type="SMR" id="Q5LZ62"/>
<dbReference type="KEGG" id="stc:str1306"/>
<dbReference type="HOGENOM" id="CLU_014841_3_2_9"/>
<dbReference type="GO" id="GO:0005737">
    <property type="term" value="C:cytoplasm"/>
    <property type="evidence" value="ECO:0007669"/>
    <property type="project" value="UniProtKB-SubCell"/>
</dbReference>
<dbReference type="GO" id="GO:0009380">
    <property type="term" value="C:excinuclease repair complex"/>
    <property type="evidence" value="ECO:0007669"/>
    <property type="project" value="InterPro"/>
</dbReference>
<dbReference type="GO" id="GO:0003677">
    <property type="term" value="F:DNA binding"/>
    <property type="evidence" value="ECO:0007669"/>
    <property type="project" value="UniProtKB-UniRule"/>
</dbReference>
<dbReference type="GO" id="GO:0009381">
    <property type="term" value="F:excinuclease ABC activity"/>
    <property type="evidence" value="ECO:0007669"/>
    <property type="project" value="UniProtKB-UniRule"/>
</dbReference>
<dbReference type="GO" id="GO:0006289">
    <property type="term" value="P:nucleotide-excision repair"/>
    <property type="evidence" value="ECO:0007669"/>
    <property type="project" value="UniProtKB-UniRule"/>
</dbReference>
<dbReference type="GO" id="GO:0009432">
    <property type="term" value="P:SOS response"/>
    <property type="evidence" value="ECO:0007669"/>
    <property type="project" value="UniProtKB-UniRule"/>
</dbReference>
<dbReference type="CDD" id="cd10434">
    <property type="entry name" value="GIY-YIG_UvrC_Cho"/>
    <property type="match status" value="1"/>
</dbReference>
<dbReference type="FunFam" id="3.30.420.340:FF:000002">
    <property type="entry name" value="UvrABC system protein C"/>
    <property type="match status" value="1"/>
</dbReference>
<dbReference type="FunFam" id="3.40.1440.10:FF:000001">
    <property type="entry name" value="UvrABC system protein C"/>
    <property type="match status" value="1"/>
</dbReference>
<dbReference type="Gene3D" id="1.10.150.20">
    <property type="entry name" value="5' to 3' exonuclease, C-terminal subdomain"/>
    <property type="match status" value="1"/>
</dbReference>
<dbReference type="Gene3D" id="3.40.1440.10">
    <property type="entry name" value="GIY-YIG endonuclease"/>
    <property type="match status" value="1"/>
</dbReference>
<dbReference type="Gene3D" id="4.10.860.10">
    <property type="entry name" value="UVR domain"/>
    <property type="match status" value="1"/>
</dbReference>
<dbReference type="Gene3D" id="3.30.420.340">
    <property type="entry name" value="UvrC, RNAse H endonuclease domain"/>
    <property type="match status" value="1"/>
</dbReference>
<dbReference type="HAMAP" id="MF_00203">
    <property type="entry name" value="UvrC"/>
    <property type="match status" value="1"/>
</dbReference>
<dbReference type="InterPro" id="IPR000305">
    <property type="entry name" value="GIY-YIG_endonuc"/>
</dbReference>
<dbReference type="InterPro" id="IPR035901">
    <property type="entry name" value="GIY-YIG_endonuc_sf"/>
</dbReference>
<dbReference type="InterPro" id="IPR047296">
    <property type="entry name" value="GIY-YIG_UvrC_Cho"/>
</dbReference>
<dbReference type="InterPro" id="IPR010994">
    <property type="entry name" value="RuvA_2-like"/>
</dbReference>
<dbReference type="InterPro" id="IPR001943">
    <property type="entry name" value="UVR_dom"/>
</dbReference>
<dbReference type="InterPro" id="IPR036876">
    <property type="entry name" value="UVR_dom_sf"/>
</dbReference>
<dbReference type="InterPro" id="IPR050066">
    <property type="entry name" value="UvrABC_protein_C"/>
</dbReference>
<dbReference type="InterPro" id="IPR004791">
    <property type="entry name" value="UvrC"/>
</dbReference>
<dbReference type="InterPro" id="IPR001162">
    <property type="entry name" value="UvrC_RNase_H_dom"/>
</dbReference>
<dbReference type="InterPro" id="IPR038476">
    <property type="entry name" value="UvrC_RNase_H_dom_sf"/>
</dbReference>
<dbReference type="NCBIfam" id="TIGR00194">
    <property type="entry name" value="uvrC"/>
    <property type="match status" value="1"/>
</dbReference>
<dbReference type="PANTHER" id="PTHR30562:SF1">
    <property type="entry name" value="UVRABC SYSTEM PROTEIN C"/>
    <property type="match status" value="1"/>
</dbReference>
<dbReference type="PANTHER" id="PTHR30562">
    <property type="entry name" value="UVRC/OXIDOREDUCTASE"/>
    <property type="match status" value="1"/>
</dbReference>
<dbReference type="Pfam" id="PF01541">
    <property type="entry name" value="GIY-YIG"/>
    <property type="match status" value="1"/>
</dbReference>
<dbReference type="Pfam" id="PF14520">
    <property type="entry name" value="HHH_5"/>
    <property type="match status" value="1"/>
</dbReference>
<dbReference type="Pfam" id="PF02151">
    <property type="entry name" value="UVR"/>
    <property type="match status" value="1"/>
</dbReference>
<dbReference type="Pfam" id="PF22920">
    <property type="entry name" value="UvrC_RNaseH"/>
    <property type="match status" value="1"/>
</dbReference>
<dbReference type="Pfam" id="PF08459">
    <property type="entry name" value="UvrC_RNaseH_dom"/>
    <property type="match status" value="1"/>
</dbReference>
<dbReference type="SMART" id="SM00465">
    <property type="entry name" value="GIYc"/>
    <property type="match status" value="1"/>
</dbReference>
<dbReference type="SUPFAM" id="SSF46600">
    <property type="entry name" value="C-terminal UvrC-binding domain of UvrB"/>
    <property type="match status" value="1"/>
</dbReference>
<dbReference type="SUPFAM" id="SSF82771">
    <property type="entry name" value="GIY-YIG endonuclease"/>
    <property type="match status" value="1"/>
</dbReference>
<dbReference type="SUPFAM" id="SSF47781">
    <property type="entry name" value="RuvA domain 2-like"/>
    <property type="match status" value="1"/>
</dbReference>
<dbReference type="PROSITE" id="PS50164">
    <property type="entry name" value="GIY_YIG"/>
    <property type="match status" value="1"/>
</dbReference>
<dbReference type="PROSITE" id="PS50151">
    <property type="entry name" value="UVR"/>
    <property type="match status" value="1"/>
</dbReference>
<dbReference type="PROSITE" id="PS50165">
    <property type="entry name" value="UVRC"/>
    <property type="match status" value="1"/>
</dbReference>
<accession>Q5LZ62</accession>
<feature type="chain" id="PRO_0000227481" description="UvrABC system protein C">
    <location>
        <begin position="1"/>
        <end position="595"/>
    </location>
</feature>
<feature type="domain" description="GIY-YIG" evidence="1">
    <location>
        <begin position="14"/>
        <end position="91"/>
    </location>
</feature>
<feature type="domain" description="UVR" evidence="1">
    <location>
        <begin position="196"/>
        <end position="231"/>
    </location>
</feature>
<keyword id="KW-0963">Cytoplasm</keyword>
<keyword id="KW-0227">DNA damage</keyword>
<keyword id="KW-0228">DNA excision</keyword>
<keyword id="KW-0234">DNA repair</keyword>
<keyword id="KW-0267">Excision nuclease</keyword>
<keyword id="KW-0742">SOS response</keyword>
<proteinExistence type="inferred from homology"/>
<organism>
    <name type="scientific">Streptococcus thermophilus (strain CNRZ 1066)</name>
    <dbReference type="NCBI Taxonomy" id="299768"/>
    <lineage>
        <taxon>Bacteria</taxon>
        <taxon>Bacillati</taxon>
        <taxon>Bacillota</taxon>
        <taxon>Bacilli</taxon>
        <taxon>Lactobacillales</taxon>
        <taxon>Streptococcaceae</taxon>
        <taxon>Streptococcus</taxon>
    </lineage>
</organism>
<evidence type="ECO:0000255" key="1">
    <source>
        <dbReference type="HAMAP-Rule" id="MF_00203"/>
    </source>
</evidence>
<reference key="1">
    <citation type="journal article" date="2004" name="Nat. Biotechnol.">
        <title>Complete sequence and comparative genome analysis of the dairy bacterium Streptococcus thermophilus.</title>
        <authorList>
            <person name="Bolotin A."/>
            <person name="Quinquis B."/>
            <person name="Renault P."/>
            <person name="Sorokin A."/>
            <person name="Ehrlich S.D."/>
            <person name="Kulakauskas S."/>
            <person name="Lapidus A."/>
            <person name="Goltsman E."/>
            <person name="Mazur M."/>
            <person name="Pusch G.D."/>
            <person name="Fonstein M."/>
            <person name="Overbeek R."/>
            <person name="Kyprides N."/>
            <person name="Purnelle B."/>
            <person name="Prozzi D."/>
            <person name="Ngui K."/>
            <person name="Masuy D."/>
            <person name="Hancy F."/>
            <person name="Burteau S."/>
            <person name="Boutry M."/>
            <person name="Delcour J."/>
            <person name="Goffeau A."/>
            <person name="Hols P."/>
        </authorList>
    </citation>
    <scope>NUCLEOTIDE SEQUENCE [LARGE SCALE GENOMIC DNA]</scope>
    <source>
        <strain>CNRZ 1066</strain>
    </source>
</reference>
<protein>
    <recommendedName>
        <fullName evidence="1">UvrABC system protein C</fullName>
        <shortName evidence="1">Protein UvrC</shortName>
    </recommendedName>
    <alternativeName>
        <fullName evidence="1">Excinuclease ABC subunit C</fullName>
    </alternativeName>
</protein>
<gene>
    <name evidence="1" type="primary">uvrC</name>
    <name type="ordered locus">str1306</name>
</gene>